<comment type="similarity">
    <text evidence="2">Belongs to the protein kinase superfamily. ADCK protein kinase family.</text>
</comment>
<gene>
    <name type="ordered locus">At2g40090</name>
    <name type="ORF">T28M21.25</name>
</gene>
<organism>
    <name type="scientific">Arabidopsis thaliana</name>
    <name type="common">Mouse-ear cress</name>
    <dbReference type="NCBI Taxonomy" id="3702"/>
    <lineage>
        <taxon>Eukaryota</taxon>
        <taxon>Viridiplantae</taxon>
        <taxon>Streptophyta</taxon>
        <taxon>Embryophyta</taxon>
        <taxon>Tracheophyta</taxon>
        <taxon>Spermatophyta</taxon>
        <taxon>Magnoliopsida</taxon>
        <taxon>eudicotyledons</taxon>
        <taxon>Gunneridae</taxon>
        <taxon>Pentapetalae</taxon>
        <taxon>rosids</taxon>
        <taxon>malvids</taxon>
        <taxon>Brassicales</taxon>
        <taxon>Brassicaceae</taxon>
        <taxon>Camelineae</taxon>
        <taxon>Arabidopsis</taxon>
    </lineage>
</organism>
<keyword id="KW-1185">Reference proteome</keyword>
<keyword id="KW-0732">Signal</keyword>
<reference key="1">
    <citation type="journal article" date="1999" name="Nature">
        <title>Sequence and analysis of chromosome 2 of the plant Arabidopsis thaliana.</title>
        <authorList>
            <person name="Lin X."/>
            <person name="Kaul S."/>
            <person name="Rounsley S.D."/>
            <person name="Shea T.P."/>
            <person name="Benito M.-I."/>
            <person name="Town C.D."/>
            <person name="Fujii C.Y."/>
            <person name="Mason T.M."/>
            <person name="Bowman C.L."/>
            <person name="Barnstead M.E."/>
            <person name="Feldblyum T.V."/>
            <person name="Buell C.R."/>
            <person name="Ketchum K.A."/>
            <person name="Lee J.J."/>
            <person name="Ronning C.M."/>
            <person name="Koo H.L."/>
            <person name="Moffat K.S."/>
            <person name="Cronin L.A."/>
            <person name="Shen M."/>
            <person name="Pai G."/>
            <person name="Van Aken S."/>
            <person name="Umayam L."/>
            <person name="Tallon L.J."/>
            <person name="Gill J.E."/>
            <person name="Adams M.D."/>
            <person name="Carrera A.J."/>
            <person name="Creasy T.H."/>
            <person name="Goodman H.M."/>
            <person name="Somerville C.R."/>
            <person name="Copenhaver G.P."/>
            <person name="Preuss D."/>
            <person name="Nierman W.C."/>
            <person name="White O."/>
            <person name="Eisen J.A."/>
            <person name="Salzberg S.L."/>
            <person name="Fraser C.M."/>
            <person name="Venter J.C."/>
        </authorList>
    </citation>
    <scope>NUCLEOTIDE SEQUENCE [LARGE SCALE GENOMIC DNA]</scope>
    <source>
        <strain>cv. Columbia</strain>
    </source>
</reference>
<reference key="2">
    <citation type="journal article" date="2017" name="Plant J.">
        <title>Araport11: a complete reannotation of the Arabidopsis thaliana reference genome.</title>
        <authorList>
            <person name="Cheng C.Y."/>
            <person name="Krishnakumar V."/>
            <person name="Chan A.P."/>
            <person name="Thibaud-Nissen F."/>
            <person name="Schobel S."/>
            <person name="Town C.D."/>
        </authorList>
    </citation>
    <scope>GENOME REANNOTATION</scope>
    <source>
        <strain>cv. Columbia</strain>
    </source>
</reference>
<reference key="3">
    <citation type="submission" date="2002-03" db="EMBL/GenBank/DDBJ databases">
        <title>Full-length cDNA from Arabidopsis thaliana.</title>
        <authorList>
            <person name="Brover V.V."/>
            <person name="Troukhan M.E."/>
            <person name="Alexandrov N.A."/>
            <person name="Lu Y.-P."/>
            <person name="Flavell R.B."/>
            <person name="Feldmann K.A."/>
        </authorList>
    </citation>
    <scope>NUCLEOTIDE SEQUENCE [LARGE SCALE MRNA]</scope>
</reference>
<evidence type="ECO:0000255" key="1"/>
<evidence type="ECO:0000305" key="2"/>
<feature type="signal peptide" evidence="1">
    <location>
        <begin position="1"/>
        <end position="26"/>
    </location>
</feature>
<feature type="chain" id="PRO_0000000264" description="Putative ABC1 protein At2g40090">
    <location>
        <begin position="27"/>
        <end position="538"/>
    </location>
</feature>
<feature type="sequence conflict" description="In Ref. 3; AAM62483." evidence="2" ref="3">
    <original>F</original>
    <variation>L</variation>
    <location>
        <position position="511"/>
    </location>
</feature>
<dbReference type="EMBL" id="AF002109">
    <property type="status" value="NOT_ANNOTATED_CDS"/>
    <property type="molecule type" value="Genomic_DNA"/>
</dbReference>
<dbReference type="EMBL" id="CP002685">
    <property type="protein sequence ID" value="AEC09776.1"/>
    <property type="molecule type" value="Genomic_DNA"/>
</dbReference>
<dbReference type="EMBL" id="AC007658">
    <property type="status" value="NOT_ANNOTATED_CDS"/>
    <property type="molecule type" value="Genomic_DNA"/>
</dbReference>
<dbReference type="EMBL" id="AY085251">
    <property type="protein sequence ID" value="AAM62483.1"/>
    <property type="molecule type" value="mRNA"/>
</dbReference>
<dbReference type="PIR" id="B84825">
    <property type="entry name" value="B84825"/>
</dbReference>
<dbReference type="SMR" id="O04212"/>
<dbReference type="FunCoup" id="O04212">
    <property type="interactions" value="3398"/>
</dbReference>
<dbReference type="STRING" id="3702.O04212"/>
<dbReference type="PaxDb" id="3702-AT2G40090.1"/>
<dbReference type="ProteomicsDB" id="242598"/>
<dbReference type="EnsemblPlants" id="AT2G40090.1">
    <property type="protein sequence ID" value="AT2G40090.1"/>
    <property type="gene ID" value="AT2G40090"/>
</dbReference>
<dbReference type="Gramene" id="AT2G40090.1">
    <property type="protein sequence ID" value="AT2G40090.1"/>
    <property type="gene ID" value="AT2G40090"/>
</dbReference>
<dbReference type="KEGG" id="ath:AT2G40090"/>
<dbReference type="Araport" id="AT2G40090"/>
<dbReference type="TAIR" id="AT2G40090">
    <property type="gene designation" value="ATH9"/>
</dbReference>
<dbReference type="eggNOG" id="KOG1235">
    <property type="taxonomic scope" value="Eukaryota"/>
</dbReference>
<dbReference type="HOGENOM" id="CLU_006533_2_0_1"/>
<dbReference type="InParanoid" id="O04212"/>
<dbReference type="OMA" id="RCNPEDI"/>
<dbReference type="PhylomeDB" id="O04212"/>
<dbReference type="PRO" id="PR:O04212"/>
<dbReference type="Proteomes" id="UP000006548">
    <property type="component" value="Chromosome 2"/>
</dbReference>
<dbReference type="ExpressionAtlas" id="O04212">
    <property type="expression patterns" value="baseline and differential"/>
</dbReference>
<dbReference type="CDD" id="cd13969">
    <property type="entry name" value="ADCK1-like"/>
    <property type="match status" value="1"/>
</dbReference>
<dbReference type="InterPro" id="IPR004147">
    <property type="entry name" value="ABC1_dom"/>
</dbReference>
<dbReference type="InterPro" id="IPR045307">
    <property type="entry name" value="ADCK1_dom"/>
</dbReference>
<dbReference type="InterPro" id="IPR011009">
    <property type="entry name" value="Kinase-like_dom_sf"/>
</dbReference>
<dbReference type="InterPro" id="IPR051130">
    <property type="entry name" value="Mito_struct-func_regulator"/>
</dbReference>
<dbReference type="PANTHER" id="PTHR43173:SF19">
    <property type="entry name" value="AARF DOMAIN-CONTAINING PROTEIN KINASE 1"/>
    <property type="match status" value="1"/>
</dbReference>
<dbReference type="PANTHER" id="PTHR43173">
    <property type="entry name" value="ABC1 FAMILY PROTEIN"/>
    <property type="match status" value="1"/>
</dbReference>
<dbReference type="Pfam" id="PF03109">
    <property type="entry name" value="ABC1"/>
    <property type="match status" value="1"/>
</dbReference>
<dbReference type="SUPFAM" id="SSF56112">
    <property type="entry name" value="Protein kinase-like (PK-like)"/>
    <property type="match status" value="1"/>
</dbReference>
<sequence length="538" mass="60919">MAARSLWRTRTKLLVVGTALCGGSGAAFIASSDDPSTTLKLCTSIPVRLYRNTVTAASIAFDYEYSLLGLAEGSSERAKVKHEVHLRSAQKLQELCFKNGGIYIKLGQHIGQLEYLVPEEYVRTMRESMLNKCPISSYEQVCEVFKKEVGEMPDQVFAEFDPVPIASASLAQVHVARTHDGKKVAVKVQHAHMTDTAAADTAAVGVLVNTLHRIFPSFDYRWLLDEMSESLPKELDFLVEAKNNEKCLDNFRKLSPHIAEYVYAPTIYWNLSTSKLLTMEFMDGAQVNDVDKIRKLGIQPYEVSKLVSQTFAEMMFKHGFVHCDPHAANLIVRPDPSGKRNIYGKRKPQLVILDHGLYKELDFNTRFNYASLWKALVFSDAKAIKEHSEKLGAGDDLYVLFAGILTMRPWKQVIDTSVDHLVIQGNKEDVSELQMYASQYFSEISELLRRLPRVILLMLKTNDCLRSVNNELMQGSSLESFLIIGKVSSQAVLEAKRAEKKSLMKWLKVWFEGFSVEARLWVMQFALWILQVRKSLTL</sequence>
<name>Y2090_ARATH</name>
<proteinExistence type="evidence at transcript level"/>
<protein>
    <recommendedName>
        <fullName>Putative ABC1 protein At2g40090</fullName>
    </recommendedName>
</protein>
<accession>O04212</accession>
<accession>Q8LET1</accession>